<feature type="chain" id="PRO_0000230503" description="Small ribosomal subunit protein uS13">
    <location>
        <begin position="1"/>
        <end position="123"/>
    </location>
</feature>
<feature type="region of interest" description="Disordered" evidence="2">
    <location>
        <begin position="97"/>
        <end position="123"/>
    </location>
</feature>
<proteinExistence type="inferred from homology"/>
<name>RS13_EHRCJ</name>
<gene>
    <name evidence="1" type="primary">rpsM</name>
    <name type="ordered locus">Ecaj_0591</name>
</gene>
<keyword id="KW-0687">Ribonucleoprotein</keyword>
<keyword id="KW-0689">Ribosomal protein</keyword>
<keyword id="KW-0694">RNA-binding</keyword>
<keyword id="KW-0699">rRNA-binding</keyword>
<keyword id="KW-0820">tRNA-binding</keyword>
<accession>Q3YRN0</accession>
<comment type="function">
    <text evidence="1">Located at the top of the head of the 30S subunit, it contacts several helices of the 16S rRNA. In the 70S ribosome it contacts the 23S rRNA (bridge B1a) and protein L5 of the 50S subunit (bridge B1b), connecting the 2 subunits; these bridges are implicated in subunit movement. Contacts the tRNAs in the A and P-sites.</text>
</comment>
<comment type="subunit">
    <text evidence="1">Part of the 30S ribosomal subunit. Forms a loose heterodimer with protein S19. Forms two bridges to the 50S subunit in the 70S ribosome.</text>
</comment>
<comment type="similarity">
    <text evidence="1">Belongs to the universal ribosomal protein uS13 family.</text>
</comment>
<reference key="1">
    <citation type="journal article" date="2006" name="J. Bacteriol.">
        <title>The genome of the obligately intracellular bacterium Ehrlichia canis reveals themes of complex membrane structure and immune evasion strategies.</title>
        <authorList>
            <person name="Mavromatis K."/>
            <person name="Doyle C.K."/>
            <person name="Lykidis A."/>
            <person name="Ivanova N."/>
            <person name="Francino M.P."/>
            <person name="Chain P."/>
            <person name="Shin M."/>
            <person name="Malfatti S."/>
            <person name="Larimer F."/>
            <person name="Copeland A."/>
            <person name="Detter J.C."/>
            <person name="Land M."/>
            <person name="Richardson P.M."/>
            <person name="Yu X.J."/>
            <person name="Walker D.H."/>
            <person name="McBride J.W."/>
            <person name="Kyrpides N.C."/>
        </authorList>
    </citation>
    <scope>NUCLEOTIDE SEQUENCE [LARGE SCALE GENOMIC DNA]</scope>
    <source>
        <strain>Jake</strain>
    </source>
</reference>
<evidence type="ECO:0000255" key="1">
    <source>
        <dbReference type="HAMAP-Rule" id="MF_01315"/>
    </source>
</evidence>
<evidence type="ECO:0000256" key="2">
    <source>
        <dbReference type="SAM" id="MobiDB-lite"/>
    </source>
</evidence>
<evidence type="ECO:0000305" key="3"/>
<sequence length="123" mass="13999">MARIAGVNIPTNKRVVIALTYIYGIGLSLANRICEGCNIDHNVRVVNLSDDEIIRIRNFIRENYIVEGDLRKEVSMNIKFLTDIGCYRGLRHRRGLPVRGQRTHTNAKTRKGRSKLPVAAKKK</sequence>
<organism>
    <name type="scientific">Ehrlichia canis (strain Jake)</name>
    <dbReference type="NCBI Taxonomy" id="269484"/>
    <lineage>
        <taxon>Bacteria</taxon>
        <taxon>Pseudomonadati</taxon>
        <taxon>Pseudomonadota</taxon>
        <taxon>Alphaproteobacteria</taxon>
        <taxon>Rickettsiales</taxon>
        <taxon>Anaplasmataceae</taxon>
        <taxon>Ehrlichia</taxon>
    </lineage>
</organism>
<protein>
    <recommendedName>
        <fullName evidence="1">Small ribosomal subunit protein uS13</fullName>
    </recommendedName>
    <alternativeName>
        <fullName evidence="3">30S ribosomal protein S13</fullName>
    </alternativeName>
</protein>
<dbReference type="EMBL" id="CP000107">
    <property type="protein sequence ID" value="AAZ68625.1"/>
    <property type="molecule type" value="Genomic_DNA"/>
</dbReference>
<dbReference type="RefSeq" id="WP_011304703.1">
    <property type="nucleotide sequence ID" value="NC_007354.1"/>
</dbReference>
<dbReference type="SMR" id="Q3YRN0"/>
<dbReference type="FunCoup" id="Q3YRN0">
    <property type="interactions" value="331"/>
</dbReference>
<dbReference type="STRING" id="269484.Ecaj_0591"/>
<dbReference type="KEGG" id="ecn:Ecaj_0591"/>
<dbReference type="eggNOG" id="COG0099">
    <property type="taxonomic scope" value="Bacteria"/>
</dbReference>
<dbReference type="HOGENOM" id="CLU_103849_1_2_5"/>
<dbReference type="InParanoid" id="Q3YRN0"/>
<dbReference type="Proteomes" id="UP000000435">
    <property type="component" value="Chromosome"/>
</dbReference>
<dbReference type="GO" id="GO:0005829">
    <property type="term" value="C:cytosol"/>
    <property type="evidence" value="ECO:0007669"/>
    <property type="project" value="TreeGrafter"/>
</dbReference>
<dbReference type="GO" id="GO:0015935">
    <property type="term" value="C:small ribosomal subunit"/>
    <property type="evidence" value="ECO:0007669"/>
    <property type="project" value="TreeGrafter"/>
</dbReference>
<dbReference type="GO" id="GO:0019843">
    <property type="term" value="F:rRNA binding"/>
    <property type="evidence" value="ECO:0007669"/>
    <property type="project" value="UniProtKB-UniRule"/>
</dbReference>
<dbReference type="GO" id="GO:0003735">
    <property type="term" value="F:structural constituent of ribosome"/>
    <property type="evidence" value="ECO:0007669"/>
    <property type="project" value="InterPro"/>
</dbReference>
<dbReference type="GO" id="GO:0000049">
    <property type="term" value="F:tRNA binding"/>
    <property type="evidence" value="ECO:0007669"/>
    <property type="project" value="UniProtKB-UniRule"/>
</dbReference>
<dbReference type="GO" id="GO:0006412">
    <property type="term" value="P:translation"/>
    <property type="evidence" value="ECO:0007669"/>
    <property type="project" value="UniProtKB-UniRule"/>
</dbReference>
<dbReference type="FunFam" id="1.10.8.50:FF:000001">
    <property type="entry name" value="30S ribosomal protein S13"/>
    <property type="match status" value="1"/>
</dbReference>
<dbReference type="FunFam" id="4.10.910.10:FF:000001">
    <property type="entry name" value="30S ribosomal protein S13"/>
    <property type="match status" value="1"/>
</dbReference>
<dbReference type="Gene3D" id="1.10.8.50">
    <property type="match status" value="1"/>
</dbReference>
<dbReference type="Gene3D" id="4.10.910.10">
    <property type="entry name" value="30s ribosomal protein s13, domain 2"/>
    <property type="match status" value="1"/>
</dbReference>
<dbReference type="HAMAP" id="MF_01315">
    <property type="entry name" value="Ribosomal_uS13"/>
    <property type="match status" value="1"/>
</dbReference>
<dbReference type="InterPro" id="IPR027437">
    <property type="entry name" value="Rbsml_uS13_C"/>
</dbReference>
<dbReference type="InterPro" id="IPR001892">
    <property type="entry name" value="Ribosomal_uS13"/>
</dbReference>
<dbReference type="InterPro" id="IPR010979">
    <property type="entry name" value="Ribosomal_uS13-like_H2TH"/>
</dbReference>
<dbReference type="InterPro" id="IPR019980">
    <property type="entry name" value="Ribosomal_uS13_bac-type"/>
</dbReference>
<dbReference type="InterPro" id="IPR018269">
    <property type="entry name" value="Ribosomal_uS13_CS"/>
</dbReference>
<dbReference type="NCBIfam" id="TIGR03631">
    <property type="entry name" value="uS13_bact"/>
    <property type="match status" value="1"/>
</dbReference>
<dbReference type="PANTHER" id="PTHR10871">
    <property type="entry name" value="30S RIBOSOMAL PROTEIN S13/40S RIBOSOMAL PROTEIN S18"/>
    <property type="match status" value="1"/>
</dbReference>
<dbReference type="PANTHER" id="PTHR10871:SF1">
    <property type="entry name" value="SMALL RIBOSOMAL SUBUNIT PROTEIN US13M"/>
    <property type="match status" value="1"/>
</dbReference>
<dbReference type="Pfam" id="PF00416">
    <property type="entry name" value="Ribosomal_S13"/>
    <property type="match status" value="1"/>
</dbReference>
<dbReference type="PIRSF" id="PIRSF002134">
    <property type="entry name" value="Ribosomal_S13"/>
    <property type="match status" value="1"/>
</dbReference>
<dbReference type="SUPFAM" id="SSF46946">
    <property type="entry name" value="S13-like H2TH domain"/>
    <property type="match status" value="1"/>
</dbReference>
<dbReference type="PROSITE" id="PS00646">
    <property type="entry name" value="RIBOSOMAL_S13_1"/>
    <property type="match status" value="1"/>
</dbReference>
<dbReference type="PROSITE" id="PS50159">
    <property type="entry name" value="RIBOSOMAL_S13_2"/>
    <property type="match status" value="1"/>
</dbReference>